<gene>
    <name type="primary">SLD7</name>
    <name type="ordered locus">KLTH0F17468g</name>
</gene>
<accession>C5DJL7</accession>
<reference key="1">
    <citation type="journal article" date="2009" name="Genome Res.">
        <title>Comparative genomics of protoploid Saccharomycetaceae.</title>
        <authorList>
            <consortium name="The Genolevures Consortium"/>
            <person name="Souciet J.-L."/>
            <person name="Dujon B."/>
            <person name="Gaillardin C."/>
            <person name="Johnston M."/>
            <person name="Baret P.V."/>
            <person name="Cliften P."/>
            <person name="Sherman D.J."/>
            <person name="Weissenbach J."/>
            <person name="Westhof E."/>
            <person name="Wincker P."/>
            <person name="Jubin C."/>
            <person name="Poulain J."/>
            <person name="Barbe V."/>
            <person name="Segurens B."/>
            <person name="Artiguenave F."/>
            <person name="Anthouard V."/>
            <person name="Vacherie B."/>
            <person name="Val M.-E."/>
            <person name="Fulton R.S."/>
            <person name="Minx P."/>
            <person name="Wilson R."/>
            <person name="Durrens P."/>
            <person name="Jean G."/>
            <person name="Marck C."/>
            <person name="Martin T."/>
            <person name="Nikolski M."/>
            <person name="Rolland T."/>
            <person name="Seret M.-L."/>
            <person name="Casaregola S."/>
            <person name="Despons L."/>
            <person name="Fairhead C."/>
            <person name="Fischer G."/>
            <person name="Lafontaine I."/>
            <person name="Leh V."/>
            <person name="Lemaire M."/>
            <person name="de Montigny J."/>
            <person name="Neuveglise C."/>
            <person name="Thierry A."/>
            <person name="Blanc-Lenfle I."/>
            <person name="Bleykasten C."/>
            <person name="Diffels J."/>
            <person name="Fritsch E."/>
            <person name="Frangeul L."/>
            <person name="Goeffon A."/>
            <person name="Jauniaux N."/>
            <person name="Kachouri-Lafond R."/>
            <person name="Payen C."/>
            <person name="Potier S."/>
            <person name="Pribylova L."/>
            <person name="Ozanne C."/>
            <person name="Richard G.-F."/>
            <person name="Sacerdot C."/>
            <person name="Straub M.-L."/>
            <person name="Talla E."/>
        </authorList>
    </citation>
    <scope>NUCLEOTIDE SEQUENCE [LARGE SCALE GENOMIC DNA]</scope>
    <source>
        <strain>ATCC 56472 / CBS 6340 / NRRL Y-8284</strain>
    </source>
</reference>
<feature type="chain" id="PRO_0000411027" description="Mitochondrial morphogenesis protein SLD7">
    <location>
        <begin position="1"/>
        <end position="241"/>
    </location>
</feature>
<evidence type="ECO:0000250" key="1"/>
<evidence type="ECO:0000305" key="2"/>
<keyword id="KW-0131">Cell cycle</keyword>
<keyword id="KW-0963">Cytoplasm</keyword>
<keyword id="KW-0206">Cytoskeleton</keyword>
<keyword id="KW-0235">DNA replication</keyword>
<keyword id="KW-0539">Nucleus</keyword>
<keyword id="KW-1185">Reference proteome</keyword>
<dbReference type="EMBL" id="CU928170">
    <property type="protein sequence ID" value="CAR24506.1"/>
    <property type="molecule type" value="Genomic_DNA"/>
</dbReference>
<dbReference type="RefSeq" id="XP_002554943.1">
    <property type="nucleotide sequence ID" value="XM_002554897.1"/>
</dbReference>
<dbReference type="SMR" id="C5DJL7"/>
<dbReference type="FunCoup" id="C5DJL7">
    <property type="interactions" value="17"/>
</dbReference>
<dbReference type="STRING" id="559295.C5DJL7"/>
<dbReference type="GeneID" id="8293178"/>
<dbReference type="KEGG" id="lth:KLTH0F17468g"/>
<dbReference type="eggNOG" id="ENOG502RZIJ">
    <property type="taxonomic scope" value="Eukaryota"/>
</dbReference>
<dbReference type="HOGENOM" id="CLU_072105_0_0_1"/>
<dbReference type="InParanoid" id="C5DJL7"/>
<dbReference type="OMA" id="EFTHRDE"/>
<dbReference type="OrthoDB" id="4063051at2759"/>
<dbReference type="Proteomes" id="UP000002036">
    <property type="component" value="Chromosome F"/>
</dbReference>
<dbReference type="GO" id="GO:0005737">
    <property type="term" value="C:cytoplasm"/>
    <property type="evidence" value="ECO:0007669"/>
    <property type="project" value="UniProtKB-KW"/>
</dbReference>
<dbReference type="GO" id="GO:0005634">
    <property type="term" value="C:nucleus"/>
    <property type="evidence" value="ECO:0007669"/>
    <property type="project" value="UniProtKB-SubCell"/>
</dbReference>
<dbReference type="GO" id="GO:0000922">
    <property type="term" value="C:spindle pole"/>
    <property type="evidence" value="ECO:0007669"/>
    <property type="project" value="UniProtKB-SubCell"/>
</dbReference>
<dbReference type="GO" id="GO:0006260">
    <property type="term" value="P:DNA replication"/>
    <property type="evidence" value="ECO:0007669"/>
    <property type="project" value="UniProtKB-KW"/>
</dbReference>
<dbReference type="InterPro" id="IPR041260">
    <property type="entry name" value="Sld7_C"/>
</dbReference>
<dbReference type="InterPro" id="IPR041564">
    <property type="entry name" value="Sld7_N"/>
</dbReference>
<dbReference type="Pfam" id="PF18596">
    <property type="entry name" value="Sld7_C"/>
    <property type="match status" value="1"/>
</dbReference>
<dbReference type="Pfam" id="PF18636">
    <property type="entry name" value="Sld7_N"/>
    <property type="match status" value="1"/>
</dbReference>
<organism>
    <name type="scientific">Lachancea thermotolerans (strain ATCC 56472 / CBS 6340 / NRRL Y-8284)</name>
    <name type="common">Yeast</name>
    <name type="synonym">Kluyveromyces thermotolerans</name>
    <dbReference type="NCBI Taxonomy" id="559295"/>
    <lineage>
        <taxon>Eukaryota</taxon>
        <taxon>Fungi</taxon>
        <taxon>Dikarya</taxon>
        <taxon>Ascomycota</taxon>
        <taxon>Saccharomycotina</taxon>
        <taxon>Saccharomycetes</taxon>
        <taxon>Saccharomycetales</taxon>
        <taxon>Saccharomycetaceae</taxon>
        <taxon>Lachancea</taxon>
    </lineage>
</organism>
<proteinExistence type="inferred from homology"/>
<protein>
    <recommendedName>
        <fullName>Mitochondrial morphogenesis protein SLD7</fullName>
    </recommendedName>
</protein>
<name>SLD7_LACTC</name>
<comment type="function">
    <text evidence="1">Required for the proper initiation of DNA replication. Required for mitochondrial morphology (By similarity).</text>
</comment>
<comment type="subcellular location">
    <subcellularLocation>
        <location evidence="1">Nucleus</location>
    </subcellularLocation>
    <subcellularLocation>
        <location evidence="1">Cytoplasm</location>
        <location evidence="1">Cytoskeleton</location>
        <location evidence="1">Spindle pole</location>
    </subcellularLocation>
</comment>
<comment type="similarity">
    <text evidence="2">Belongs to the SLD7 family.</text>
</comment>
<sequence>MNSECILTLDVGNGVVIQDVQLWGNSVETQLPKKGKARVVAHIDTRKLPLWARTRGLFTCFSSSSTTAAYFRAKLLKDRHAHRGIVAELDKLYLVFFRKEQSPSSFQIECIRLNLALKRKFDTQLLQASTVSSQPTMSPHIDEIVAKQSLARAESSLRISRHVQLADYRRQFSSTASSCILGGLRLRGIRESEADYHKIYKMTYSAIEFAFRSELSNASPPISFEQVQETVETLLKVFTRS</sequence>